<comment type="function">
    <text evidence="1">Catalyzes the oxidation of erythronate-4-phosphate to 3-hydroxy-2-oxo-4-phosphonooxybutanoate.</text>
</comment>
<comment type="catalytic activity">
    <reaction evidence="1">
        <text>4-phospho-D-erythronate + NAD(+) = (R)-3-hydroxy-2-oxo-4-phosphooxybutanoate + NADH + H(+)</text>
        <dbReference type="Rhea" id="RHEA:18829"/>
        <dbReference type="ChEBI" id="CHEBI:15378"/>
        <dbReference type="ChEBI" id="CHEBI:57540"/>
        <dbReference type="ChEBI" id="CHEBI:57945"/>
        <dbReference type="ChEBI" id="CHEBI:58538"/>
        <dbReference type="ChEBI" id="CHEBI:58766"/>
        <dbReference type="EC" id="1.1.1.290"/>
    </reaction>
</comment>
<comment type="pathway">
    <text evidence="1">Cofactor biosynthesis; pyridoxine 5'-phosphate biosynthesis; pyridoxine 5'-phosphate from D-erythrose 4-phosphate: step 2/5.</text>
</comment>
<comment type="subunit">
    <text evidence="1">Homodimer.</text>
</comment>
<comment type="subcellular location">
    <subcellularLocation>
        <location evidence="1">Cytoplasm</location>
    </subcellularLocation>
</comment>
<comment type="similarity">
    <text evidence="1">Belongs to the D-isomer specific 2-hydroxyacid dehydrogenase family. PdxB subfamily.</text>
</comment>
<sequence length="384" mass="42533">MLIVADENIPLLDSFFGDIGEIRRVNGRTLTPDQVKDADILLVRSVTRVDRQLLEGTRVRFVGTATIGTDHIDQTWLQEQGIGFAAAPGCNAVSVAEYVLSVLSLYAEKRGIEDWSSLTVGIVGVGNVGGELARMLERLDFTVKLCDPPRQEAEEERAEEFVPLAEALECDVVTLHTPLTRTGDHPTNRMIAGSELAALGQDQLLINAGRGEVIDGEALLARLQQADAPTVVLDVWEHEPRINPDLLDRVWLATPHIAGYSLEGKMQGTEMIYQALCRYLGLPVRKKAGQFLPEPALSKVSFTSSADEDEAVQVALRACYDPRRDDARLRLTMRGNPEERAQAFDRLRRDYPVRRECSSLKVQLKGSSKSIQDSFRAIGFKLKI</sequence>
<name>PDXB_MARN8</name>
<evidence type="ECO:0000255" key="1">
    <source>
        <dbReference type="HAMAP-Rule" id="MF_01825"/>
    </source>
</evidence>
<organism>
    <name type="scientific">Marinobacter nauticus (strain ATCC 700491 / DSM 11845 / VT8)</name>
    <name type="common">Marinobacter aquaeolei</name>
    <dbReference type="NCBI Taxonomy" id="351348"/>
    <lineage>
        <taxon>Bacteria</taxon>
        <taxon>Pseudomonadati</taxon>
        <taxon>Pseudomonadota</taxon>
        <taxon>Gammaproteobacteria</taxon>
        <taxon>Pseudomonadales</taxon>
        <taxon>Marinobacteraceae</taxon>
        <taxon>Marinobacter</taxon>
    </lineage>
</organism>
<protein>
    <recommendedName>
        <fullName evidence="1">Erythronate-4-phosphate dehydrogenase</fullName>
        <ecNumber evidence="1">1.1.1.290</ecNumber>
    </recommendedName>
</protein>
<accession>A1U1I8</accession>
<reference key="1">
    <citation type="journal article" date="2011" name="Appl. Environ. Microbiol.">
        <title>Genomic potential of Marinobacter aquaeolei, a biogeochemical 'opportunitroph'.</title>
        <authorList>
            <person name="Singer E."/>
            <person name="Webb E.A."/>
            <person name="Nelson W.C."/>
            <person name="Heidelberg J.F."/>
            <person name="Ivanova N."/>
            <person name="Pati A."/>
            <person name="Edwards K.J."/>
        </authorList>
    </citation>
    <scope>NUCLEOTIDE SEQUENCE [LARGE SCALE GENOMIC DNA]</scope>
    <source>
        <strain>ATCC 700491 / DSM 11845 / VT8</strain>
    </source>
</reference>
<proteinExistence type="inferred from homology"/>
<dbReference type="EC" id="1.1.1.290" evidence="1"/>
<dbReference type="EMBL" id="CP000514">
    <property type="protein sequence ID" value="ABM18857.1"/>
    <property type="molecule type" value="Genomic_DNA"/>
</dbReference>
<dbReference type="RefSeq" id="WP_011785255.1">
    <property type="nucleotide sequence ID" value="NC_008740.1"/>
</dbReference>
<dbReference type="SMR" id="A1U1I8"/>
<dbReference type="STRING" id="351348.Maqu_1775"/>
<dbReference type="KEGG" id="maq:Maqu_1775"/>
<dbReference type="eggNOG" id="COG0111">
    <property type="taxonomic scope" value="Bacteria"/>
</dbReference>
<dbReference type="HOGENOM" id="CLU_019796_4_0_6"/>
<dbReference type="OrthoDB" id="9770208at2"/>
<dbReference type="UniPathway" id="UPA00244">
    <property type="reaction ID" value="UER00310"/>
</dbReference>
<dbReference type="Proteomes" id="UP000000998">
    <property type="component" value="Chromosome"/>
</dbReference>
<dbReference type="GO" id="GO:0005829">
    <property type="term" value="C:cytosol"/>
    <property type="evidence" value="ECO:0007669"/>
    <property type="project" value="TreeGrafter"/>
</dbReference>
<dbReference type="GO" id="GO:0033711">
    <property type="term" value="F:4-phosphoerythronate dehydrogenase activity"/>
    <property type="evidence" value="ECO:0007669"/>
    <property type="project" value="UniProtKB-EC"/>
</dbReference>
<dbReference type="GO" id="GO:0051287">
    <property type="term" value="F:NAD binding"/>
    <property type="evidence" value="ECO:0007669"/>
    <property type="project" value="InterPro"/>
</dbReference>
<dbReference type="GO" id="GO:0046983">
    <property type="term" value="F:protein dimerization activity"/>
    <property type="evidence" value="ECO:0007669"/>
    <property type="project" value="InterPro"/>
</dbReference>
<dbReference type="GO" id="GO:0036001">
    <property type="term" value="P:'de novo' pyridoxal 5'-phosphate biosynthetic process"/>
    <property type="evidence" value="ECO:0007669"/>
    <property type="project" value="TreeGrafter"/>
</dbReference>
<dbReference type="GO" id="GO:0008615">
    <property type="term" value="P:pyridoxine biosynthetic process"/>
    <property type="evidence" value="ECO:0007669"/>
    <property type="project" value="UniProtKB-UniRule"/>
</dbReference>
<dbReference type="CDD" id="cd12158">
    <property type="entry name" value="ErythrP_dh"/>
    <property type="match status" value="1"/>
</dbReference>
<dbReference type="Gene3D" id="3.30.1370.170">
    <property type="match status" value="1"/>
</dbReference>
<dbReference type="Gene3D" id="3.40.50.720">
    <property type="entry name" value="NAD(P)-binding Rossmann-like Domain"/>
    <property type="match status" value="2"/>
</dbReference>
<dbReference type="HAMAP" id="MF_01825">
    <property type="entry name" value="PdxB"/>
    <property type="match status" value="1"/>
</dbReference>
<dbReference type="InterPro" id="IPR006139">
    <property type="entry name" value="D-isomer_2_OHA_DH_cat_dom"/>
</dbReference>
<dbReference type="InterPro" id="IPR029752">
    <property type="entry name" value="D-isomer_DH_CS1"/>
</dbReference>
<dbReference type="InterPro" id="IPR006140">
    <property type="entry name" value="D-isomer_DH_NAD-bd"/>
</dbReference>
<dbReference type="InterPro" id="IPR020921">
    <property type="entry name" value="Erythronate-4-P_DHase"/>
</dbReference>
<dbReference type="InterPro" id="IPR024531">
    <property type="entry name" value="Erythronate-4-P_DHase_dimer"/>
</dbReference>
<dbReference type="InterPro" id="IPR036291">
    <property type="entry name" value="NAD(P)-bd_dom_sf"/>
</dbReference>
<dbReference type="InterPro" id="IPR038251">
    <property type="entry name" value="PdxB_dimer_sf"/>
</dbReference>
<dbReference type="NCBIfam" id="NF001309">
    <property type="entry name" value="PRK00257.1"/>
    <property type="match status" value="1"/>
</dbReference>
<dbReference type="PANTHER" id="PTHR42938">
    <property type="entry name" value="FORMATE DEHYDROGENASE 1"/>
    <property type="match status" value="1"/>
</dbReference>
<dbReference type="PANTHER" id="PTHR42938:SF9">
    <property type="entry name" value="FORMATE DEHYDROGENASE 1"/>
    <property type="match status" value="1"/>
</dbReference>
<dbReference type="Pfam" id="PF00389">
    <property type="entry name" value="2-Hacid_dh"/>
    <property type="match status" value="1"/>
</dbReference>
<dbReference type="Pfam" id="PF02826">
    <property type="entry name" value="2-Hacid_dh_C"/>
    <property type="match status" value="1"/>
</dbReference>
<dbReference type="Pfam" id="PF11890">
    <property type="entry name" value="DUF3410"/>
    <property type="match status" value="1"/>
</dbReference>
<dbReference type="SUPFAM" id="SSF52283">
    <property type="entry name" value="Formate/glycerate dehydrogenase catalytic domain-like"/>
    <property type="match status" value="1"/>
</dbReference>
<dbReference type="SUPFAM" id="SSF51735">
    <property type="entry name" value="NAD(P)-binding Rossmann-fold domains"/>
    <property type="match status" value="1"/>
</dbReference>
<dbReference type="PROSITE" id="PS00065">
    <property type="entry name" value="D_2_HYDROXYACID_DH_1"/>
    <property type="match status" value="1"/>
</dbReference>
<keyword id="KW-0963">Cytoplasm</keyword>
<keyword id="KW-0520">NAD</keyword>
<keyword id="KW-0560">Oxidoreductase</keyword>
<keyword id="KW-0664">Pyridoxine biosynthesis</keyword>
<feature type="chain" id="PRO_0000297447" description="Erythronate-4-phosphate dehydrogenase">
    <location>
        <begin position="1"/>
        <end position="384"/>
    </location>
</feature>
<feature type="active site" evidence="1">
    <location>
        <position position="210"/>
    </location>
</feature>
<feature type="active site" evidence="1">
    <location>
        <position position="239"/>
    </location>
</feature>
<feature type="active site" description="Proton donor" evidence="1">
    <location>
        <position position="256"/>
    </location>
</feature>
<feature type="binding site" evidence="1">
    <location>
        <position position="45"/>
    </location>
    <ligand>
        <name>substrate</name>
    </ligand>
</feature>
<feature type="binding site" evidence="1">
    <location>
        <position position="66"/>
    </location>
    <ligand>
        <name>substrate</name>
    </ligand>
</feature>
<feature type="binding site" evidence="1">
    <location>
        <position position="147"/>
    </location>
    <ligand>
        <name>NAD(+)</name>
        <dbReference type="ChEBI" id="CHEBI:57540"/>
    </ligand>
</feature>
<feature type="binding site" evidence="1">
    <location>
        <position position="177"/>
    </location>
    <ligand>
        <name>NAD(+)</name>
        <dbReference type="ChEBI" id="CHEBI:57540"/>
    </ligand>
</feature>
<feature type="binding site" evidence="1">
    <location>
        <position position="234"/>
    </location>
    <ligand>
        <name>NAD(+)</name>
        <dbReference type="ChEBI" id="CHEBI:57540"/>
    </ligand>
</feature>
<feature type="binding site" evidence="1">
    <location>
        <position position="259"/>
    </location>
    <ligand>
        <name>NAD(+)</name>
        <dbReference type="ChEBI" id="CHEBI:57540"/>
    </ligand>
</feature>
<feature type="binding site" evidence="1">
    <location>
        <position position="260"/>
    </location>
    <ligand>
        <name>substrate</name>
    </ligand>
</feature>
<gene>
    <name evidence="1" type="primary">pdxB</name>
    <name type="ordered locus">Maqu_1775</name>
</gene>